<organism>
    <name type="scientific">Brucella melitensis biotype 2 (strain ATCC 23457)</name>
    <dbReference type="NCBI Taxonomy" id="546272"/>
    <lineage>
        <taxon>Bacteria</taxon>
        <taxon>Pseudomonadati</taxon>
        <taxon>Pseudomonadota</taxon>
        <taxon>Alphaproteobacteria</taxon>
        <taxon>Hyphomicrobiales</taxon>
        <taxon>Brucellaceae</taxon>
        <taxon>Brucella/Ochrobactrum group</taxon>
        <taxon>Brucella</taxon>
    </lineage>
</organism>
<feature type="chain" id="PRO_1000164673" description="Orotate phosphoribosyltransferase">
    <location>
        <begin position="1"/>
        <end position="192"/>
    </location>
</feature>
<feature type="binding site" evidence="1">
    <location>
        <begin position="116"/>
        <end position="124"/>
    </location>
    <ligand>
        <name>5-phospho-alpha-D-ribose 1-diphosphate</name>
        <dbReference type="ChEBI" id="CHEBI:58017"/>
    </ligand>
</feature>
<feature type="binding site" evidence="1">
    <location>
        <position position="120"/>
    </location>
    <ligand>
        <name>orotate</name>
        <dbReference type="ChEBI" id="CHEBI:30839"/>
    </ligand>
</feature>
<feature type="binding site" evidence="1">
    <location>
        <position position="148"/>
    </location>
    <ligand>
        <name>orotate</name>
        <dbReference type="ChEBI" id="CHEBI:30839"/>
    </ligand>
</feature>
<protein>
    <recommendedName>
        <fullName evidence="1">Orotate phosphoribosyltransferase</fullName>
        <shortName evidence="1">OPRT</shortName>
        <shortName evidence="1">OPRTase</shortName>
        <ecNumber evidence="1">2.4.2.10</ecNumber>
    </recommendedName>
</protein>
<name>PYRE_BRUMB</name>
<accession>C0RHZ5</accession>
<evidence type="ECO:0000255" key="1">
    <source>
        <dbReference type="HAMAP-Rule" id="MF_01208"/>
    </source>
</evidence>
<proteinExistence type="inferred from homology"/>
<gene>
    <name evidence="1" type="primary">pyrE</name>
    <name type="ordered locus">BMEA_A0690</name>
</gene>
<reference key="1">
    <citation type="submission" date="2009-03" db="EMBL/GenBank/DDBJ databases">
        <title>Brucella melitensis ATCC 23457 whole genome shotgun sequencing project.</title>
        <authorList>
            <person name="Setubal J.C."/>
            <person name="Boyle S."/>
            <person name="Crasta O.R."/>
            <person name="Gillespie J.J."/>
            <person name="Kenyon R.W."/>
            <person name="Lu J."/>
            <person name="Mane S."/>
            <person name="Nagrani S."/>
            <person name="Shallom J.M."/>
            <person name="Shallom S."/>
            <person name="Shukla M."/>
            <person name="Snyder E.E."/>
            <person name="Sobral B.W."/>
            <person name="Wattam A.R."/>
            <person name="Will R."/>
            <person name="Williams K."/>
            <person name="Yoo H."/>
            <person name="Munk C."/>
            <person name="Tapia R."/>
            <person name="Han C."/>
            <person name="Detter J.C."/>
            <person name="Bruce D."/>
            <person name="Brettin T.S."/>
        </authorList>
    </citation>
    <scope>NUCLEOTIDE SEQUENCE [LARGE SCALE GENOMIC DNA]</scope>
    <source>
        <strain>ATCC 23457</strain>
    </source>
</reference>
<comment type="function">
    <text evidence="1">Catalyzes the transfer of a ribosyl phosphate group from 5-phosphoribose 1-diphosphate to orotate, leading to the formation of orotidine monophosphate (OMP).</text>
</comment>
<comment type="catalytic activity">
    <reaction evidence="1">
        <text>orotidine 5'-phosphate + diphosphate = orotate + 5-phospho-alpha-D-ribose 1-diphosphate</text>
        <dbReference type="Rhea" id="RHEA:10380"/>
        <dbReference type="ChEBI" id="CHEBI:30839"/>
        <dbReference type="ChEBI" id="CHEBI:33019"/>
        <dbReference type="ChEBI" id="CHEBI:57538"/>
        <dbReference type="ChEBI" id="CHEBI:58017"/>
        <dbReference type="EC" id="2.4.2.10"/>
    </reaction>
</comment>
<comment type="cofactor">
    <cofactor evidence="1">
        <name>Mg(2+)</name>
        <dbReference type="ChEBI" id="CHEBI:18420"/>
    </cofactor>
</comment>
<comment type="pathway">
    <text evidence="1">Pyrimidine metabolism; UMP biosynthesis via de novo pathway; UMP from orotate: step 1/2.</text>
</comment>
<comment type="subunit">
    <text evidence="1">Homodimer.</text>
</comment>
<comment type="similarity">
    <text evidence="1">Belongs to the purine/pyrimidine phosphoribosyltransferase family. PyrE subfamily.</text>
</comment>
<dbReference type="EC" id="2.4.2.10" evidence="1"/>
<dbReference type="EMBL" id="CP001488">
    <property type="protein sequence ID" value="ACO00453.1"/>
    <property type="molecule type" value="Genomic_DNA"/>
</dbReference>
<dbReference type="RefSeq" id="WP_002963797.1">
    <property type="nucleotide sequence ID" value="NC_012441.1"/>
</dbReference>
<dbReference type="SMR" id="C0RHZ5"/>
<dbReference type="GeneID" id="97534018"/>
<dbReference type="KEGG" id="bmi:BMEA_A0690"/>
<dbReference type="HOGENOM" id="CLU_074878_3_0_5"/>
<dbReference type="UniPathway" id="UPA00070">
    <property type="reaction ID" value="UER00119"/>
</dbReference>
<dbReference type="Proteomes" id="UP000001748">
    <property type="component" value="Chromosome I"/>
</dbReference>
<dbReference type="GO" id="GO:0000287">
    <property type="term" value="F:magnesium ion binding"/>
    <property type="evidence" value="ECO:0007669"/>
    <property type="project" value="UniProtKB-UniRule"/>
</dbReference>
<dbReference type="GO" id="GO:0004588">
    <property type="term" value="F:orotate phosphoribosyltransferase activity"/>
    <property type="evidence" value="ECO:0007669"/>
    <property type="project" value="UniProtKB-UniRule"/>
</dbReference>
<dbReference type="GO" id="GO:0044205">
    <property type="term" value="P:'de novo' UMP biosynthetic process"/>
    <property type="evidence" value="ECO:0007669"/>
    <property type="project" value="UniProtKB-UniRule"/>
</dbReference>
<dbReference type="GO" id="GO:0019856">
    <property type="term" value="P:pyrimidine nucleobase biosynthetic process"/>
    <property type="evidence" value="ECO:0007669"/>
    <property type="project" value="InterPro"/>
</dbReference>
<dbReference type="CDD" id="cd06223">
    <property type="entry name" value="PRTases_typeI"/>
    <property type="match status" value="1"/>
</dbReference>
<dbReference type="Gene3D" id="3.40.50.2020">
    <property type="match status" value="1"/>
</dbReference>
<dbReference type="HAMAP" id="MF_01208">
    <property type="entry name" value="PyrE"/>
    <property type="match status" value="1"/>
</dbReference>
<dbReference type="InterPro" id="IPR023031">
    <property type="entry name" value="OPRT"/>
</dbReference>
<dbReference type="InterPro" id="IPR006273">
    <property type="entry name" value="Orotate_PRibTrfase_bac"/>
</dbReference>
<dbReference type="InterPro" id="IPR000836">
    <property type="entry name" value="PRibTrfase_dom"/>
</dbReference>
<dbReference type="InterPro" id="IPR029057">
    <property type="entry name" value="PRTase-like"/>
</dbReference>
<dbReference type="NCBIfam" id="TIGR01367">
    <property type="entry name" value="pyrE_Therm"/>
    <property type="match status" value="1"/>
</dbReference>
<dbReference type="PANTHER" id="PTHR19278">
    <property type="entry name" value="OROTATE PHOSPHORIBOSYLTRANSFERASE"/>
    <property type="match status" value="1"/>
</dbReference>
<dbReference type="PANTHER" id="PTHR19278:SF9">
    <property type="entry name" value="URIDINE 5'-MONOPHOSPHATE SYNTHASE"/>
    <property type="match status" value="1"/>
</dbReference>
<dbReference type="Pfam" id="PF00156">
    <property type="entry name" value="Pribosyltran"/>
    <property type="match status" value="1"/>
</dbReference>
<dbReference type="SUPFAM" id="SSF53271">
    <property type="entry name" value="PRTase-like"/>
    <property type="match status" value="1"/>
</dbReference>
<dbReference type="PROSITE" id="PS00103">
    <property type="entry name" value="PUR_PYR_PR_TRANSFER"/>
    <property type="match status" value="1"/>
</dbReference>
<sequence length="192" mass="20733">MNTDDVLAVFREAGAILEGHFILTSGLRSPVFLQKARVFMHADKTEKLCKALAEKIRAADLGPIDYVVGPAIGGLIPSYETSRHLGVPSVWVERENGVFRLRRFDVPKGARVVIVEDIVTTGLSIRETIDCMKDLGIEVVAAACIVDRSAGKADVGTRLISLAEYEVPAYPADKLPPELAAIPAVKPGSRNI</sequence>
<keyword id="KW-0328">Glycosyltransferase</keyword>
<keyword id="KW-0460">Magnesium</keyword>
<keyword id="KW-0665">Pyrimidine biosynthesis</keyword>
<keyword id="KW-0808">Transferase</keyword>